<dbReference type="EC" id="1.4.3.11" evidence="3 4"/>
<dbReference type="EMBL" id="DS999641">
    <property type="protein sequence ID" value="EFE71695.2"/>
    <property type="molecule type" value="Genomic_DNA"/>
</dbReference>
<dbReference type="RefSeq" id="WP_004992920.1">
    <property type="nucleotide sequence ID" value="NZ_DS999641.1"/>
</dbReference>
<dbReference type="SMR" id="D6A5I3"/>
<dbReference type="eggNOG" id="COG1231">
    <property type="taxonomic scope" value="Bacteria"/>
</dbReference>
<dbReference type="BRENDA" id="1.4.3.11">
    <property type="organism ID" value="6117"/>
</dbReference>
<dbReference type="Proteomes" id="UP000003824">
    <property type="component" value="Unassembled WGS sequence"/>
</dbReference>
<dbReference type="GO" id="GO:0005576">
    <property type="term" value="C:extracellular region"/>
    <property type="evidence" value="ECO:0007669"/>
    <property type="project" value="UniProtKB-SubCell"/>
</dbReference>
<dbReference type="GO" id="GO:0001716">
    <property type="term" value="F:L-amino-acid oxidase activity"/>
    <property type="evidence" value="ECO:0007669"/>
    <property type="project" value="TreeGrafter"/>
</dbReference>
<dbReference type="GO" id="GO:0000166">
    <property type="term" value="F:nucleotide binding"/>
    <property type="evidence" value="ECO:0007669"/>
    <property type="project" value="UniProtKB-KW"/>
</dbReference>
<dbReference type="GO" id="GO:0009063">
    <property type="term" value="P:amino acid catabolic process"/>
    <property type="evidence" value="ECO:0007669"/>
    <property type="project" value="TreeGrafter"/>
</dbReference>
<dbReference type="Gene3D" id="1.10.10.1620">
    <property type="match status" value="1"/>
</dbReference>
<dbReference type="Gene3D" id="1.10.10.1790">
    <property type="match status" value="1"/>
</dbReference>
<dbReference type="Gene3D" id="3.30.1490.470">
    <property type="match status" value="1"/>
</dbReference>
<dbReference type="Gene3D" id="3.30.160.490">
    <property type="match status" value="1"/>
</dbReference>
<dbReference type="Gene3D" id="3.30.70.2100">
    <property type="match status" value="1"/>
</dbReference>
<dbReference type="Gene3D" id="6.10.140.1210">
    <property type="match status" value="1"/>
</dbReference>
<dbReference type="Gene3D" id="3.50.50.60">
    <property type="entry name" value="FAD/NAD(P)-binding domain"/>
    <property type="match status" value="1"/>
</dbReference>
<dbReference type="Gene3D" id="1.10.405.10">
    <property type="entry name" value="Guanine Nucleotide Dissociation Inhibitor, domain 1"/>
    <property type="match status" value="1"/>
</dbReference>
<dbReference type="InterPro" id="IPR002937">
    <property type="entry name" value="Amino_oxidase"/>
</dbReference>
<dbReference type="InterPro" id="IPR036188">
    <property type="entry name" value="FAD/NAD-bd_sf"/>
</dbReference>
<dbReference type="InterPro" id="IPR050281">
    <property type="entry name" value="Flavin_monoamine_oxidase"/>
</dbReference>
<dbReference type="InterPro" id="IPR006311">
    <property type="entry name" value="TAT_signal"/>
</dbReference>
<dbReference type="PANTHER" id="PTHR10742:SF342">
    <property type="entry name" value="AMINE OXIDASE"/>
    <property type="match status" value="1"/>
</dbReference>
<dbReference type="PANTHER" id="PTHR10742">
    <property type="entry name" value="FLAVIN MONOAMINE OXIDASE"/>
    <property type="match status" value="1"/>
</dbReference>
<dbReference type="Pfam" id="PF01593">
    <property type="entry name" value="Amino_oxidase"/>
    <property type="match status" value="1"/>
</dbReference>
<dbReference type="SUPFAM" id="SSF54373">
    <property type="entry name" value="FAD-linked reductases, C-terminal domain"/>
    <property type="match status" value="1"/>
</dbReference>
<dbReference type="SUPFAM" id="SSF51905">
    <property type="entry name" value="FAD/NAD(P)-binding domain"/>
    <property type="match status" value="1"/>
</dbReference>
<dbReference type="PROSITE" id="PS51318">
    <property type="entry name" value="TAT"/>
    <property type="match status" value="1"/>
</dbReference>
<gene>
    <name evidence="5" type="primary">lgoX</name>
    <name evidence="6" type="synonym">gox</name>
    <name evidence="8" type="ORF">SSFG_06931</name>
</gene>
<proteinExistence type="evidence at protein level"/>
<keyword id="KW-0274">FAD</keyword>
<keyword id="KW-0285">Flavoprotein</keyword>
<keyword id="KW-0547">Nucleotide-binding</keyword>
<keyword id="KW-0560">Oxidoreductase</keyword>
<keyword id="KW-0964">Secreted</keyword>
<keyword id="KW-0732">Signal</keyword>
<keyword id="KW-0865">Zymogen</keyword>
<feature type="signal peptide" description="Tat-type signal" evidence="2">
    <location>
        <begin position="1"/>
        <end position="44"/>
    </location>
</feature>
<feature type="chain" id="PRO_0000457969" description="L-glutamate oxidase precursor" evidence="2">
    <location>
        <begin position="45"/>
        <end position="664"/>
    </location>
</feature>
<feature type="chain" id="PRO_0000457970" description="L-glutamate oxidase alpha chain" evidence="7">
    <location>
        <begin position="45"/>
        <end status="unknown"/>
    </location>
</feature>
<feature type="chain" id="PRO_0000457971" description="L-glutamate oxidase gamma chain" evidence="7">
    <location>
        <begin position="397"/>
        <end status="unknown"/>
    </location>
</feature>
<feature type="chain" id="PRO_0000457972" description="L-glutamate oxidase beta chain" evidence="7">
    <location>
        <begin position="513"/>
        <end status="unknown"/>
    </location>
</feature>
<feature type="binding site" evidence="1">
    <location>
        <position position="105"/>
    </location>
    <ligand>
        <name>FAD</name>
        <dbReference type="ChEBI" id="CHEBI:57692"/>
    </ligand>
</feature>
<feature type="binding site" evidence="1">
    <location>
        <position position="124"/>
    </location>
    <ligand>
        <name>FAD</name>
        <dbReference type="ChEBI" id="CHEBI:57692"/>
    </ligand>
</feature>
<feature type="binding site" evidence="1">
    <location>
        <position position="125"/>
    </location>
    <ligand>
        <name>FAD</name>
        <dbReference type="ChEBI" id="CHEBI:57692"/>
    </ligand>
</feature>
<feature type="binding site" evidence="1">
    <location>
        <position position="133"/>
    </location>
    <ligand>
        <name>FAD</name>
        <dbReference type="ChEBI" id="CHEBI:57692"/>
    </ligand>
</feature>
<feature type="binding site" evidence="1">
    <location>
        <position position="161"/>
    </location>
    <ligand>
        <name>FAD</name>
        <dbReference type="ChEBI" id="CHEBI:57692"/>
    </ligand>
</feature>
<feature type="binding site" evidence="1">
    <location>
        <position position="162"/>
    </location>
    <ligand>
        <name>FAD</name>
        <dbReference type="ChEBI" id="CHEBI:57692"/>
    </ligand>
</feature>
<feature type="binding site" evidence="1">
    <location>
        <position position="638"/>
    </location>
    <ligand>
        <name>FAD</name>
        <dbReference type="ChEBI" id="CHEBI:57692"/>
    </ligand>
</feature>
<feature type="binding site" evidence="1">
    <location>
        <position position="646"/>
    </location>
    <ligand>
        <name>FAD</name>
        <dbReference type="ChEBI" id="CHEBI:57692"/>
    </ligand>
</feature>
<feature type="binding site" evidence="1">
    <location>
        <position position="647"/>
    </location>
    <ligand>
        <name>FAD</name>
        <dbReference type="ChEBI" id="CHEBI:57692"/>
    </ligand>
</feature>
<feature type="site" description="Important for substrate specificity" evidence="1">
    <location>
        <position position="310"/>
    </location>
</feature>
<protein>
    <recommendedName>
        <fullName evidence="5">L-glutamate oxidase precursor</fullName>
        <shortName evidence="6">GLOD</shortName>
        <shortName evidence="5">LGOX</shortName>
        <ecNumber evidence="3 4">1.4.3.11</ecNumber>
    </recommendedName>
    <component>
        <recommendedName>
            <fullName evidence="1">L-glutamate oxidase alpha chain</fullName>
        </recommendedName>
    </component>
    <component>
        <recommendedName>
            <fullName evidence="1">L-glutamate oxidase gamma chain</fullName>
        </recommendedName>
    </component>
    <component>
        <recommendedName>
            <fullName evidence="1">L-glutamate oxidase beta chain</fullName>
        </recommendedName>
    </component>
</protein>
<evidence type="ECO:0000250" key="1">
    <source>
        <dbReference type="UniProtKB" id="Q8L3C7"/>
    </source>
</evidence>
<evidence type="ECO:0000255" key="2">
    <source>
        <dbReference type="PROSITE-ProRule" id="PRU00648"/>
    </source>
</evidence>
<evidence type="ECO:0000269" key="3">
    <source>
    </source>
</evidence>
<evidence type="ECO:0000269" key="4">
    <source>
    </source>
</evidence>
<evidence type="ECO:0000303" key="5">
    <source>
    </source>
</evidence>
<evidence type="ECO:0000303" key="6">
    <source>
    </source>
</evidence>
<evidence type="ECO:0000305" key="7"/>
<evidence type="ECO:0000312" key="8">
    <source>
        <dbReference type="EMBL" id="EFE71695.2"/>
    </source>
</evidence>
<comment type="function">
    <text evidence="3 4">Catalyzes the oxidative deamination of L-glutamate to 2-ketoglutarate along with the production of ammonia and hydrogen peroxide.</text>
</comment>
<comment type="catalytic activity">
    <reaction evidence="3 4">
        <text>L-glutamate + O2 + H2O = H2O2 + 2-oxoglutarate + NH4(+)</text>
        <dbReference type="Rhea" id="RHEA:20728"/>
        <dbReference type="ChEBI" id="CHEBI:15377"/>
        <dbReference type="ChEBI" id="CHEBI:15379"/>
        <dbReference type="ChEBI" id="CHEBI:16240"/>
        <dbReference type="ChEBI" id="CHEBI:16810"/>
        <dbReference type="ChEBI" id="CHEBI:28938"/>
        <dbReference type="ChEBI" id="CHEBI:29985"/>
        <dbReference type="EC" id="1.4.3.11"/>
    </reaction>
</comment>
<comment type="cofactor">
    <cofactor evidence="1">
        <name>FAD</name>
        <dbReference type="ChEBI" id="CHEBI:57692"/>
    </cofactor>
</comment>
<comment type="activity regulation">
    <text evidence="3">Activity is stimulated in the presence of Mn(2+), Ca(2+) or Mg(2+).</text>
</comment>
<comment type="biophysicochemical properties">
    <phDependence>
        <text evidence="3 4">Optimum pH is 6.5 for recombinant LGOX expressed in E.coli or in P.pastoris.</text>
    </phDependence>
    <temperatureDependence>
        <text evidence="3 4">Optimum temperature is 30 degrees Celsius for recombinant LGOX expressed in E.coli (PubMed:24657922). Optimum temperature is 40 degrees Celsius for recombinant LGOX expressed in P.pastoris (PubMed:27693490).</text>
    </temperatureDependence>
</comment>
<comment type="subunit">
    <text evidence="1">The mature enzyme is a heterohexamer composed of 2 alpha chains, 2 beta chains and 2 gamma chains (alpha2beta2gamma2).</text>
</comment>
<comment type="subcellular location">
    <subcellularLocation>
        <location evidence="1">Secreted</location>
    </subcellularLocation>
</comment>
<comment type="PTM">
    <text evidence="2">Predicted to be exported by the Tat system. The position of the signal peptide cleavage has not been experimentally proven.</text>
</comment>
<comment type="PTM">
    <text evidence="1">The precursor form is proteolytically cleaved by an endopeptidase into alpha, beta and gamma chains, which form the stable mature enzyme.</text>
</comment>
<comment type="biotechnology">
    <text evidence="3 4">LGOX is a good choice for alpha-ketoglutarate production from the inexpensive starting material L-glutamic acid (PubMed:24657922, PubMed:27693490). By combining a multi-copy expression approach and fermentation involving two exponential feeding phases in a yeast host (P.pastoris), the yield of the recombinant L-glutamate oxidase is significantly improved (PubMed:27693490). Furthermore, recombinant enzyme expressed in P.pastoris displays higher thermo-stability compared with enzyme produced in E.coli, which makes it more suitable for use in industrial applications (PubMed:27693490).</text>
</comment>
<comment type="similarity">
    <text evidence="7">Belongs to the flavin monoamine oxidase family. LGOX subfamily.</text>
</comment>
<reference key="1">
    <citation type="submission" date="2008-12" db="EMBL/GenBank/DDBJ databases">
        <title>Annotation of Streptomyces ghanaensis ATCC 14672.</title>
        <authorList>
            <consortium name="The Broad Institute Genome Sequencing Platform"/>
            <consortium name="Broad Institute Microbial Sequencing Center"/>
            <person name="Fischbach M."/>
            <person name="Ward D."/>
            <person name="Young S."/>
            <person name="Kodira C.D."/>
            <person name="Zeng Q."/>
            <person name="Koehrsen M."/>
            <person name="Godfrey P."/>
            <person name="Alvarado L."/>
            <person name="Berlin A.M."/>
            <person name="Borenstein D."/>
            <person name="Chen Z."/>
            <person name="Engels R."/>
            <person name="Freedman E."/>
            <person name="Gellesch M."/>
            <person name="Goldberg J."/>
            <person name="Griggs A."/>
            <person name="Gujja S."/>
            <person name="Heiman D.I."/>
            <person name="Hepburn T.A."/>
            <person name="Howarth C."/>
            <person name="Jen D."/>
            <person name="Larson L."/>
            <person name="Lewis B."/>
            <person name="Mehta T."/>
            <person name="Park D."/>
            <person name="Pearson M."/>
            <person name="Roberts A."/>
            <person name="Saif S."/>
            <person name="Shea T.D."/>
            <person name="Shenoy N."/>
            <person name="Sisk P."/>
            <person name="Stolte C."/>
            <person name="Sykes S.N."/>
            <person name="Walk T."/>
            <person name="White J."/>
            <person name="Yandava C."/>
            <person name="Straight P."/>
            <person name="Clardy J."/>
            <person name="Hung D."/>
            <person name="Kolter R."/>
            <person name="Mekalanos J."/>
            <person name="Walker S."/>
            <person name="Walsh C.T."/>
            <person name="Wieland B.L.C."/>
            <person name="Ilzarbe M."/>
            <person name="Galagan J."/>
            <person name="Nusbaum C."/>
            <person name="Birren B."/>
        </authorList>
    </citation>
    <scope>NUCLEOTIDE SEQUENCE [LARGE SCALE GENOMIC DNA]</scope>
    <source>
        <strain>ATCC 14672 / DSM 40746 / JCM 4963 / KCTC 9882 / NRRL B-12104 / FH 1290</strain>
    </source>
</reference>
<reference key="2">
    <citation type="journal article" date="2014" name="J. Biotechnol.">
        <title>Enzymatic production of alpha-ketoglutaric acid from L-glutamic acid via L-glutamate oxidase.</title>
        <authorList>
            <person name="Niu P."/>
            <person name="Dong X."/>
            <person name="Wang Y."/>
            <person name="Liu L."/>
        </authorList>
    </citation>
    <scope>FUNCTION</scope>
    <scope>CATALYTIC ACTIVITY</scope>
    <scope>ACTIVITY REGULATION</scope>
    <scope>BIOPHYSICOCHEMICAL PROPERTIES</scope>
    <scope>BIOTECHNOLOGY</scope>
    <source>
        <strain>ATCC 14672 / DSM 40746 / JCM 4963 / KCTC 9882 / NRRL B-12104 / FH 1290</strain>
    </source>
</reference>
<reference key="3">
    <citation type="journal article" date="2017" name="Protein Expr. Purif.">
        <title>High-level expression of L-glutamate oxidase in Pichia pastoris using multi-copy expression strains and high cell density cultivation.</title>
        <authorList>
            <person name="YaPing W."/>
            <person name="Ben R."/>
            <person name="Hong Y."/>
            <person name="Rui H."/>
            <person name="Li L."/>
            <person name="Ping'an L."/>
            <person name="Lixin M."/>
        </authorList>
    </citation>
    <scope>FUNCTION</scope>
    <scope>CATALYTIC ACTIVITY</scope>
    <scope>BIOPHYSICOCHEMICAL PROPERTIES</scope>
    <scope>BIOTECHNOLOGY</scope>
    <source>
        <strain>ATCC 14672 / DSM 40746 / JCM 4963 / KCTC 9882 / NRRL B-12104 / FH 1290</strain>
    </source>
</reference>
<name>LGOX_STRV1</name>
<accession>D6A5I3</accession>
<organism>
    <name type="scientific">Streptomyces viridosporus (strain ATCC 14672 / DSM 40746 / JCM 4963 / KCTC 9882 / NRRL B-12104 / FH 1290)</name>
    <name type="common">Streptomyces ghanaensis</name>
    <dbReference type="NCBI Taxonomy" id="566461"/>
    <lineage>
        <taxon>Bacteria</taxon>
        <taxon>Bacillati</taxon>
        <taxon>Actinomycetota</taxon>
        <taxon>Actinomycetes</taxon>
        <taxon>Kitasatosporales</taxon>
        <taxon>Streptomycetaceae</taxon>
        <taxon>Streptomyces</taxon>
    </lineage>
</organism>
<sequence length="664" mass="73021">MTEDHAVVRSDGGLSRRSFAAVAGTATVATALTSGVAAALPAPAASGDSRGADFDRCLAVARALLVLDSDDRPLVPRYQSVLQKGLPAQRRTRPKNVLVIGAGPAGLVAAWLLKRAGHRVTVLEANGNRAGGRVKTFRSGGHERAEQPFADPRQYAEAGAMRIPGSHPLVMELIDQFELKKRRFHYVDVDSEGRPANRTWIHVNGIRVRRADYARAPRRVNRSFGVPRAHWDTPAAAILRSVLDPVRDEFSRVGRDGKRVDKPLPERLQGWARVVQRFGDWSMFRFLTEHAGLDERTIDLIGTLENLTSRLPLSFIHSFIGSSLISPDTPFYELEGGTAVLPDALLERVRKDVRFDRRVTRIQYHHPDRPSPDVEQVRSKGPHVWVDTVSEGRDGPVVREQFTADVAVVTVPFSGLRHVQIAPPLSYGKRRAVCELHYDSATKVLLEFSRRWWEFDEADWKRELRAVDPGLYDAYRTGRAAADGSLLGAHPSVPAGHITAGQRTHYAANRAVARDQPEAVDVVGGGSVSDNANRFMFHPSHPVPGSAGGVVLASYSWADDALRWDSLDDEARYPHALCGLQQVYGQRIEVFYTGAGRTQSWLRDPYAYGEASVLLPGQHTELLSAIPVAEGPLHFAGDHTSVKPAWIEGAVESAVRAALEIHTA</sequence>